<dbReference type="EMBL" id="CP000742">
    <property type="protein sequence ID" value="ABR55418.1"/>
    <property type="molecule type" value="Genomic_DNA"/>
</dbReference>
<dbReference type="RefSeq" id="WP_012066332.1">
    <property type="nucleotide sequence ID" value="NC_009634.1"/>
</dbReference>
<dbReference type="SMR" id="A6USE6"/>
<dbReference type="STRING" id="406327.Mevan_1524"/>
<dbReference type="GeneID" id="5325099"/>
<dbReference type="KEGG" id="mvn:Mevan_1524"/>
<dbReference type="eggNOG" id="arCOG04245">
    <property type="taxonomic scope" value="Archaea"/>
</dbReference>
<dbReference type="HOGENOM" id="CLU_058171_3_0_2"/>
<dbReference type="OrthoDB" id="371797at2157"/>
<dbReference type="Proteomes" id="UP000001107">
    <property type="component" value="Chromosome"/>
</dbReference>
<dbReference type="GO" id="GO:0015935">
    <property type="term" value="C:small ribosomal subunit"/>
    <property type="evidence" value="ECO:0007669"/>
    <property type="project" value="InterPro"/>
</dbReference>
<dbReference type="GO" id="GO:0003735">
    <property type="term" value="F:structural constituent of ribosome"/>
    <property type="evidence" value="ECO:0007669"/>
    <property type="project" value="InterPro"/>
</dbReference>
<dbReference type="GO" id="GO:0006412">
    <property type="term" value="P:translation"/>
    <property type="evidence" value="ECO:0007669"/>
    <property type="project" value="UniProtKB-UniRule"/>
</dbReference>
<dbReference type="CDD" id="cd01425">
    <property type="entry name" value="RPS2"/>
    <property type="match status" value="1"/>
</dbReference>
<dbReference type="FunFam" id="3.40.50.10490:FF:000030">
    <property type="entry name" value="30S ribosomal protein S2"/>
    <property type="match status" value="1"/>
</dbReference>
<dbReference type="Gene3D" id="3.40.50.10490">
    <property type="entry name" value="Glucose-6-phosphate isomerase like protein, domain 1"/>
    <property type="match status" value="1"/>
</dbReference>
<dbReference type="HAMAP" id="MF_00291_A">
    <property type="entry name" value="Ribosomal_uS2_A"/>
    <property type="match status" value="1"/>
</dbReference>
<dbReference type="InterPro" id="IPR001865">
    <property type="entry name" value="Ribosomal_uS2"/>
</dbReference>
<dbReference type="InterPro" id="IPR023454">
    <property type="entry name" value="Ribosomal_uS2_arc"/>
</dbReference>
<dbReference type="InterPro" id="IPR018130">
    <property type="entry name" value="Ribosomal_uS2_CS"/>
</dbReference>
<dbReference type="InterPro" id="IPR005707">
    <property type="entry name" value="Ribosomal_uS2_euk/arc"/>
</dbReference>
<dbReference type="InterPro" id="IPR023591">
    <property type="entry name" value="Ribosomal_uS2_flav_dom_sf"/>
</dbReference>
<dbReference type="NCBIfam" id="TIGR01012">
    <property type="entry name" value="uS2_euk_arch"/>
    <property type="match status" value="1"/>
</dbReference>
<dbReference type="PANTHER" id="PTHR11489">
    <property type="entry name" value="40S RIBOSOMAL PROTEIN SA"/>
    <property type="match status" value="1"/>
</dbReference>
<dbReference type="Pfam" id="PF00318">
    <property type="entry name" value="Ribosomal_S2"/>
    <property type="match status" value="2"/>
</dbReference>
<dbReference type="PRINTS" id="PR00395">
    <property type="entry name" value="RIBOSOMALS2"/>
</dbReference>
<dbReference type="SUPFAM" id="SSF52313">
    <property type="entry name" value="Ribosomal protein S2"/>
    <property type="match status" value="1"/>
</dbReference>
<dbReference type="PROSITE" id="PS00963">
    <property type="entry name" value="RIBOSOMAL_S2_2"/>
    <property type="match status" value="1"/>
</dbReference>
<gene>
    <name evidence="1" type="primary">rps2</name>
    <name type="ordered locus">Mevan_1524</name>
</gene>
<keyword id="KW-0687">Ribonucleoprotein</keyword>
<keyword id="KW-0689">Ribosomal protein</keyword>
<feature type="chain" id="PRO_0000352066" description="Small ribosomal subunit protein uS2">
    <location>
        <begin position="1"/>
        <end position="221"/>
    </location>
</feature>
<feature type="region of interest" description="Disordered" evidence="2">
    <location>
        <begin position="202"/>
        <end position="221"/>
    </location>
</feature>
<reference key="1">
    <citation type="submission" date="2007-06" db="EMBL/GenBank/DDBJ databases">
        <title>Complete sequence of Methanococcus vannielii SB.</title>
        <authorList>
            <consortium name="US DOE Joint Genome Institute"/>
            <person name="Copeland A."/>
            <person name="Lucas S."/>
            <person name="Lapidus A."/>
            <person name="Barry K."/>
            <person name="Glavina del Rio T."/>
            <person name="Dalin E."/>
            <person name="Tice H."/>
            <person name="Pitluck S."/>
            <person name="Chain P."/>
            <person name="Malfatti S."/>
            <person name="Shin M."/>
            <person name="Vergez L."/>
            <person name="Schmutz J."/>
            <person name="Larimer F."/>
            <person name="Land M."/>
            <person name="Hauser L."/>
            <person name="Kyrpides N."/>
            <person name="Anderson I."/>
            <person name="Sieprawska-Lupa M."/>
            <person name="Whitman W.B."/>
            <person name="Richardson P."/>
        </authorList>
    </citation>
    <scope>NUCLEOTIDE SEQUENCE [LARGE SCALE GENOMIC DNA]</scope>
    <source>
        <strain>ATCC 35089 / DSM 1224 / JCM 13029 / OCM 148 / SB</strain>
    </source>
</reference>
<accession>A6USE6</accession>
<sequence length="221" mass="25252">MSDENLLTSLDTYLASGIHIGTQQKTEDMKRFIYRVRSDGLYVLDVRKTDERLRLAAKFLSNYEPQDIMAVTRRVYSVGPLKKFGETTGINTVAGRFVPGTLTNPAAKKFAEPEVMFLSDPRVDKQALKEAIEIGIPIVSMCDTEHLTAHLDFIIPTNNKGRKSVSLMYFLIAREYLKNRGIIGEEVPFSYDDFLEKAMGAKVKMPQQNQRGRPQRRFQRR</sequence>
<evidence type="ECO:0000255" key="1">
    <source>
        <dbReference type="HAMAP-Rule" id="MF_00291"/>
    </source>
</evidence>
<evidence type="ECO:0000256" key="2">
    <source>
        <dbReference type="SAM" id="MobiDB-lite"/>
    </source>
</evidence>
<evidence type="ECO:0000305" key="3"/>
<name>RS2_METVS</name>
<protein>
    <recommendedName>
        <fullName evidence="1">Small ribosomal subunit protein uS2</fullName>
    </recommendedName>
    <alternativeName>
        <fullName evidence="3">30S ribosomal protein S2</fullName>
    </alternativeName>
</protein>
<comment type="similarity">
    <text evidence="1">Belongs to the universal ribosomal protein uS2 family.</text>
</comment>
<proteinExistence type="inferred from homology"/>
<organism>
    <name type="scientific">Methanococcus vannielii (strain ATCC 35089 / DSM 1224 / JCM 13029 / OCM 148 / SB)</name>
    <dbReference type="NCBI Taxonomy" id="406327"/>
    <lineage>
        <taxon>Archaea</taxon>
        <taxon>Methanobacteriati</taxon>
        <taxon>Methanobacteriota</taxon>
        <taxon>Methanomada group</taxon>
        <taxon>Methanococci</taxon>
        <taxon>Methanococcales</taxon>
        <taxon>Methanococcaceae</taxon>
        <taxon>Methanococcus</taxon>
    </lineage>
</organism>